<organismHost>
    <name type="scientific">Cynomys gunnisoni</name>
    <name type="common">Gunnison's prairie dog</name>
    <name type="synonym">Spermophilus gunnisoni</name>
    <dbReference type="NCBI Taxonomy" id="45479"/>
</organismHost>
<organismHost>
    <name type="scientific">Cynomys leucurus</name>
    <name type="common">White-tailed prairie dog</name>
    <dbReference type="NCBI Taxonomy" id="99825"/>
</organismHost>
<organismHost>
    <name type="scientific">Cynomys ludovicianus</name>
    <name type="common">Black-tailed prairie dog</name>
    <dbReference type="NCBI Taxonomy" id="45480"/>
</organismHost>
<organismHost>
    <name type="scientific">Cynomys mexicanus</name>
    <name type="common">Mexican prairie dog</name>
    <dbReference type="NCBI Taxonomy" id="99826"/>
</organismHost>
<organismHost>
    <name type="scientific">Cynomys parvidens</name>
    <name type="common">Utah prairie dog</name>
    <dbReference type="NCBI Taxonomy" id="99827"/>
</organismHost>
<organismHost>
    <name type="scientific">Gliridae</name>
    <name type="common">dormice</name>
    <dbReference type="NCBI Taxonomy" id="30650"/>
</organismHost>
<organismHost>
    <name type="scientific">Heliosciurus ruwenzorii</name>
    <name type="common">Ruwenzori sun squirrel</name>
    <dbReference type="NCBI Taxonomy" id="226685"/>
</organismHost>
<organismHost>
    <name type="scientific">Homo sapiens</name>
    <name type="common">Human</name>
    <dbReference type="NCBI Taxonomy" id="9606"/>
</organismHost>
<organismHost>
    <name type="scientific">Mus musculus</name>
    <name type="common">Mouse</name>
    <dbReference type="NCBI Taxonomy" id="10090"/>
</organismHost>
<keyword id="KW-0244">Early protein</keyword>
<keyword id="KW-1185">Reference proteome</keyword>
<accession>A0A7H0DN31</accession>
<gene>
    <name type="primary">OPG058</name>
    <name type="ORF">MPXVgp046</name>
</gene>
<protein>
    <recommendedName>
        <fullName>Protein OPG058</fullName>
    </recommendedName>
</protein>
<organism>
    <name type="scientific">Monkeypox virus</name>
    <dbReference type="NCBI Taxonomy" id="10244"/>
    <lineage>
        <taxon>Viruses</taxon>
        <taxon>Varidnaviria</taxon>
        <taxon>Bamfordvirae</taxon>
        <taxon>Nucleocytoviricota</taxon>
        <taxon>Pokkesviricetes</taxon>
        <taxon>Chitovirales</taxon>
        <taxon>Poxviridae</taxon>
        <taxon>Chordopoxvirinae</taxon>
        <taxon>Orthopoxvirus</taxon>
    </lineage>
</organism>
<comment type="induction">
    <text evidence="1">Expressed in the early phase of the viral replicative cycle.</text>
</comment>
<comment type="similarity">
    <text evidence="2">Belongs to the orthopoxvirus OPG058 family.</text>
</comment>
<name>PG058_MONPV</name>
<reference key="1">
    <citation type="journal article" date="2022" name="J. Infect. Dis.">
        <title>Exportation of Monkeypox virus from the African continent.</title>
        <authorList>
            <person name="Mauldin M.R."/>
            <person name="McCollum A.M."/>
            <person name="Nakazawa Y.J."/>
            <person name="Mandra A."/>
            <person name="Whitehouse E.R."/>
            <person name="Davidson W."/>
            <person name="Zhao H."/>
            <person name="Gao J."/>
            <person name="Li Y."/>
            <person name="Doty J."/>
            <person name="Yinka-Ogunleye A."/>
            <person name="Akinpelu A."/>
            <person name="Aruna O."/>
            <person name="Naidoo D."/>
            <person name="Lewandowski K."/>
            <person name="Afrough B."/>
            <person name="Graham V."/>
            <person name="Aarons E."/>
            <person name="Hewson R."/>
            <person name="Vipond R."/>
            <person name="Dunning J."/>
            <person name="Chand M."/>
            <person name="Brown C."/>
            <person name="Cohen-Gihon I."/>
            <person name="Erez N."/>
            <person name="Shifman O."/>
            <person name="Israeli O."/>
            <person name="Sharon M."/>
            <person name="Schwartz E."/>
            <person name="Beth-Din A."/>
            <person name="Zvi A."/>
            <person name="Mak T.M."/>
            <person name="Ng Y.K."/>
            <person name="Cui L."/>
            <person name="Lin R.T.P."/>
            <person name="Olson V.A."/>
            <person name="Brooks T."/>
            <person name="Paran N."/>
            <person name="Ihekweazu C."/>
            <person name="Reynolds M.G."/>
        </authorList>
    </citation>
    <scope>NUCLEOTIDE SEQUENCE [LARGE SCALE GENOMIC DNA]</scope>
    <source>
        <strain>MPXV-M5312_HM12_Rivers</strain>
    </source>
</reference>
<evidence type="ECO:0000250" key="1">
    <source>
        <dbReference type="UniProtKB" id="P68707"/>
    </source>
</evidence>
<evidence type="ECO:0000305" key="2"/>
<proteinExistence type="inferred from homology"/>
<sequence length="73" mass="8281">MKHRLYSEGLSISNDLNSIIGQQSTMDTDIEIDEDDIMELLNILTELGCDVDFDENFSDIADDILESLIEQDI</sequence>
<dbReference type="EMBL" id="MT903340">
    <property type="protein sequence ID" value="QNP12914.1"/>
    <property type="molecule type" value="Genomic_DNA"/>
</dbReference>
<dbReference type="RefSeq" id="NP_536473.1">
    <property type="nucleotide sequence ID" value="NC_003310.1"/>
</dbReference>
<dbReference type="RefSeq" id="YP_010377041.1">
    <property type="nucleotide sequence ID" value="NC_063383.1"/>
</dbReference>
<dbReference type="SMR" id="A0A7H0DN31"/>
<dbReference type="GeneID" id="72551454"/>
<dbReference type="GeneID" id="928977"/>
<dbReference type="KEGG" id="vg:928977"/>
<dbReference type="Proteomes" id="UP000516359">
    <property type="component" value="Genome"/>
</dbReference>
<dbReference type="InterPro" id="IPR009280">
    <property type="entry name" value="Orthopox_F14"/>
</dbReference>
<dbReference type="Pfam" id="PF06076">
    <property type="entry name" value="Orthopox_F14"/>
    <property type="match status" value="1"/>
</dbReference>
<feature type="chain" id="PRO_0000457652" description="Protein OPG058">
    <location>
        <begin position="1"/>
        <end position="73"/>
    </location>
</feature>